<dbReference type="EMBL" id="D83674">
    <property type="protein sequence ID" value="BAA12041.1"/>
    <property type="molecule type" value="mRNA"/>
</dbReference>
<dbReference type="EMBL" id="BC125505">
    <property type="protein sequence ID" value="AAI25506.1"/>
    <property type="molecule type" value="mRNA"/>
</dbReference>
<dbReference type="EMBL" id="BC125507">
    <property type="protein sequence ID" value="AAI25508.1"/>
    <property type="molecule type" value="mRNA"/>
</dbReference>
<dbReference type="CCDS" id="CCDS21387.1"/>
<dbReference type="RefSeq" id="NP_032614.2">
    <property type="nucleotide sequence ID" value="NM_008588.2"/>
</dbReference>
<dbReference type="SMR" id="P97309"/>
<dbReference type="FunCoup" id="P97309">
    <property type="interactions" value="683"/>
</dbReference>
<dbReference type="STRING" id="10090.ENSMUSP00000032760"/>
<dbReference type="PhosphoSitePlus" id="P97309"/>
<dbReference type="PaxDb" id="10090-ENSMUSP00000032760"/>
<dbReference type="Antibodypedia" id="28662">
    <property type="antibodies" value="322 antibodies from 31 providers"/>
</dbReference>
<dbReference type="DNASU" id="17292"/>
<dbReference type="Ensembl" id="ENSMUST00000032760.6">
    <property type="protein sequence ID" value="ENSMUSP00000032760.6"/>
    <property type="gene ID" value="ENSMUSG00000030544.6"/>
</dbReference>
<dbReference type="GeneID" id="17292"/>
<dbReference type="KEGG" id="mmu:17292"/>
<dbReference type="UCSC" id="uc009hzb.2">
    <property type="organism name" value="mouse"/>
</dbReference>
<dbReference type="AGR" id="MGI:107785"/>
<dbReference type="CTD" id="55897"/>
<dbReference type="MGI" id="MGI:107785">
    <property type="gene designation" value="Mesp1"/>
</dbReference>
<dbReference type="VEuPathDB" id="HostDB:ENSMUSG00000030544"/>
<dbReference type="eggNOG" id="KOG4029">
    <property type="taxonomic scope" value="Eukaryota"/>
</dbReference>
<dbReference type="GeneTree" id="ENSGT00530000063712"/>
<dbReference type="HOGENOM" id="CLU_064749_1_0_1"/>
<dbReference type="InParanoid" id="P97309"/>
<dbReference type="OMA" id="PLSESWM"/>
<dbReference type="OrthoDB" id="9946827at2759"/>
<dbReference type="PhylomeDB" id="P97309"/>
<dbReference type="TreeFam" id="TF325707"/>
<dbReference type="BioGRID-ORCS" id="17292">
    <property type="hits" value="1 hit in 78 CRISPR screens"/>
</dbReference>
<dbReference type="ChiTaRS" id="Mesp1">
    <property type="organism name" value="mouse"/>
</dbReference>
<dbReference type="PRO" id="PR:P97309"/>
<dbReference type="Proteomes" id="UP000000589">
    <property type="component" value="Chromosome 7"/>
</dbReference>
<dbReference type="RNAct" id="P97309">
    <property type="molecule type" value="protein"/>
</dbReference>
<dbReference type="Bgee" id="ENSMUSG00000030544">
    <property type="expression patterns" value="Expressed in seminiferous tubule of testis and 47 other cell types or tissues"/>
</dbReference>
<dbReference type="GO" id="GO:0005654">
    <property type="term" value="C:nucleoplasm"/>
    <property type="evidence" value="ECO:0000304"/>
    <property type="project" value="Reactome"/>
</dbReference>
<dbReference type="GO" id="GO:0005634">
    <property type="term" value="C:nucleus"/>
    <property type="evidence" value="ECO:0000314"/>
    <property type="project" value="BHF-UCL"/>
</dbReference>
<dbReference type="GO" id="GO:0000987">
    <property type="term" value="F:cis-regulatory region sequence-specific DNA binding"/>
    <property type="evidence" value="ECO:0000314"/>
    <property type="project" value="BHF-UCL"/>
</dbReference>
<dbReference type="GO" id="GO:0001228">
    <property type="term" value="F:DNA-binding transcription activator activity, RNA polymerase II-specific"/>
    <property type="evidence" value="ECO:0000314"/>
    <property type="project" value="NTNU_SB"/>
</dbReference>
<dbReference type="GO" id="GO:0003700">
    <property type="term" value="F:DNA-binding transcription factor activity"/>
    <property type="evidence" value="ECO:0000315"/>
    <property type="project" value="BHF-UCL"/>
</dbReference>
<dbReference type="GO" id="GO:0046983">
    <property type="term" value="F:protein dimerization activity"/>
    <property type="evidence" value="ECO:0007669"/>
    <property type="project" value="InterPro"/>
</dbReference>
<dbReference type="GO" id="GO:0000978">
    <property type="term" value="F:RNA polymerase II cis-regulatory region sequence-specific DNA binding"/>
    <property type="evidence" value="ECO:0000314"/>
    <property type="project" value="NTNU_SB"/>
</dbReference>
<dbReference type="GO" id="GO:0003210">
    <property type="term" value="P:cardiac atrium formation"/>
    <property type="evidence" value="ECO:0007669"/>
    <property type="project" value="Ensembl"/>
</dbReference>
<dbReference type="GO" id="GO:0060913">
    <property type="term" value="P:cardiac cell fate determination"/>
    <property type="evidence" value="ECO:0000314"/>
    <property type="project" value="BHF-UCL"/>
</dbReference>
<dbReference type="GO" id="GO:0060947">
    <property type="term" value="P:cardiac vascular smooth muscle cell differentiation"/>
    <property type="evidence" value="ECO:0007669"/>
    <property type="project" value="Ensembl"/>
</dbReference>
<dbReference type="GO" id="GO:0003211">
    <property type="term" value="P:cardiac ventricle formation"/>
    <property type="evidence" value="ECO:0007669"/>
    <property type="project" value="Ensembl"/>
</dbReference>
<dbReference type="GO" id="GO:0003259">
    <property type="term" value="P:cardioblast anterior-lateral migration"/>
    <property type="evidence" value="ECO:0000315"/>
    <property type="project" value="BHF-UCL"/>
</dbReference>
<dbReference type="GO" id="GO:0003260">
    <property type="term" value="P:cardioblast migration"/>
    <property type="evidence" value="ECO:0000315"/>
    <property type="project" value="MGI"/>
</dbReference>
<dbReference type="GO" id="GO:0060975">
    <property type="term" value="P:cardioblast migration to the midline involved in heart field formation"/>
    <property type="evidence" value="ECO:0000315"/>
    <property type="project" value="BHF-UCL"/>
</dbReference>
<dbReference type="GO" id="GO:0003143">
    <property type="term" value="P:embryonic heart tube morphogenesis"/>
    <property type="evidence" value="ECO:0000315"/>
    <property type="project" value="BHF-UCL"/>
</dbReference>
<dbReference type="GO" id="GO:0045446">
    <property type="term" value="P:endothelial cell differentiation"/>
    <property type="evidence" value="ECO:0007669"/>
    <property type="project" value="Ensembl"/>
</dbReference>
<dbReference type="GO" id="GO:0007369">
    <property type="term" value="P:gastrulation"/>
    <property type="evidence" value="ECO:0000270"/>
    <property type="project" value="BHF-UCL"/>
</dbReference>
<dbReference type="GO" id="GO:0010467">
    <property type="term" value="P:gene expression"/>
    <property type="evidence" value="ECO:0000315"/>
    <property type="project" value="MGI"/>
</dbReference>
<dbReference type="GO" id="GO:0003241">
    <property type="term" value="P:growth involved in heart morphogenesis"/>
    <property type="evidence" value="ECO:0000315"/>
    <property type="project" value="BHF-UCL"/>
</dbReference>
<dbReference type="GO" id="GO:0003129">
    <property type="term" value="P:heart induction"/>
    <property type="evidence" value="ECO:0000314"/>
    <property type="project" value="BHF-UCL"/>
</dbReference>
<dbReference type="GO" id="GO:0001947">
    <property type="term" value="P:heart looping"/>
    <property type="evidence" value="ECO:0000315"/>
    <property type="project" value="BHF-UCL"/>
</dbReference>
<dbReference type="GO" id="GO:0003007">
    <property type="term" value="P:heart morphogenesis"/>
    <property type="evidence" value="ECO:0000315"/>
    <property type="project" value="MGI"/>
</dbReference>
<dbReference type="GO" id="GO:0048368">
    <property type="term" value="P:lateral mesoderm development"/>
    <property type="evidence" value="ECO:0000315"/>
    <property type="project" value="BHF-UCL"/>
</dbReference>
<dbReference type="GO" id="GO:0008078">
    <property type="term" value="P:mesodermal cell migration"/>
    <property type="evidence" value="ECO:0000316"/>
    <property type="project" value="MGI"/>
</dbReference>
<dbReference type="GO" id="GO:0090090">
    <property type="term" value="P:negative regulation of canonical Wnt signaling pathway"/>
    <property type="evidence" value="ECO:0000314"/>
    <property type="project" value="BHF-UCL"/>
</dbReference>
<dbReference type="GO" id="GO:0045892">
    <property type="term" value="P:negative regulation of DNA-templated transcription"/>
    <property type="evidence" value="ECO:0000314"/>
    <property type="project" value="BHF-UCL"/>
</dbReference>
<dbReference type="GO" id="GO:0042664">
    <property type="term" value="P:negative regulation of endodermal cell fate specification"/>
    <property type="evidence" value="ECO:0000314"/>
    <property type="project" value="BHF-UCL"/>
</dbReference>
<dbReference type="GO" id="GO:0042662">
    <property type="term" value="P:negative regulation of mesodermal cell fate specification"/>
    <property type="evidence" value="ECO:0000314"/>
    <property type="project" value="BHF-UCL"/>
</dbReference>
<dbReference type="GO" id="GO:0022008">
    <property type="term" value="P:neurogenesis"/>
    <property type="evidence" value="ECO:0007669"/>
    <property type="project" value="Ensembl"/>
</dbReference>
<dbReference type="GO" id="GO:0007219">
    <property type="term" value="P:Notch signaling pathway"/>
    <property type="evidence" value="ECO:0007669"/>
    <property type="project" value="UniProtKB-KW"/>
</dbReference>
<dbReference type="GO" id="GO:0045893">
    <property type="term" value="P:positive regulation of DNA-templated transcription"/>
    <property type="evidence" value="ECO:0000314"/>
    <property type="project" value="BHF-UCL"/>
</dbReference>
<dbReference type="GO" id="GO:0070368">
    <property type="term" value="P:positive regulation of hepatocyte differentiation"/>
    <property type="evidence" value="ECO:0000314"/>
    <property type="project" value="BHF-UCL"/>
</dbReference>
<dbReference type="GO" id="GO:0045747">
    <property type="term" value="P:positive regulation of Notch signaling pathway"/>
    <property type="evidence" value="ECO:0000314"/>
    <property type="project" value="BHF-UCL"/>
</dbReference>
<dbReference type="GO" id="GO:0051155">
    <property type="term" value="P:positive regulation of striated muscle cell differentiation"/>
    <property type="evidence" value="ECO:0000314"/>
    <property type="project" value="BHF-UCL"/>
</dbReference>
<dbReference type="GO" id="GO:0045944">
    <property type="term" value="P:positive regulation of transcription by RNA polymerase II"/>
    <property type="evidence" value="ECO:0000315"/>
    <property type="project" value="BHF-UCL"/>
</dbReference>
<dbReference type="GO" id="GO:0003139">
    <property type="term" value="P:secondary heart field specification"/>
    <property type="evidence" value="ECO:0000314"/>
    <property type="project" value="BHF-UCL"/>
</dbReference>
<dbReference type="GO" id="GO:0023019">
    <property type="term" value="P:signal transduction involved in regulation of gene expression"/>
    <property type="evidence" value="ECO:0000314"/>
    <property type="project" value="MGI"/>
</dbReference>
<dbReference type="GO" id="GO:0060921">
    <property type="term" value="P:sinoatrial node cell differentiation"/>
    <property type="evidence" value="ECO:0007669"/>
    <property type="project" value="Ensembl"/>
</dbReference>
<dbReference type="GO" id="GO:0003236">
    <property type="term" value="P:sinus venosus morphogenesis"/>
    <property type="evidence" value="ECO:0000315"/>
    <property type="project" value="BHF-UCL"/>
</dbReference>
<dbReference type="FunFam" id="4.10.280.10:FF:000047">
    <property type="entry name" value="mesoderm posterior protein 1"/>
    <property type="match status" value="1"/>
</dbReference>
<dbReference type="Gene3D" id="4.10.280.10">
    <property type="entry name" value="Helix-loop-helix DNA-binding domain"/>
    <property type="match status" value="1"/>
</dbReference>
<dbReference type="InterPro" id="IPR011598">
    <property type="entry name" value="bHLH_dom"/>
</dbReference>
<dbReference type="InterPro" id="IPR036638">
    <property type="entry name" value="HLH_DNA-bd_sf"/>
</dbReference>
<dbReference type="InterPro" id="IPR040259">
    <property type="entry name" value="Mesogenin/MesP"/>
</dbReference>
<dbReference type="PANTHER" id="PTHR20937">
    <property type="entry name" value="IP14615P"/>
    <property type="match status" value="1"/>
</dbReference>
<dbReference type="PANTHER" id="PTHR20937:SF6">
    <property type="entry name" value="MESODERM POSTERIOR PROTEIN 1"/>
    <property type="match status" value="1"/>
</dbReference>
<dbReference type="Pfam" id="PF00010">
    <property type="entry name" value="HLH"/>
    <property type="match status" value="1"/>
</dbReference>
<dbReference type="SMART" id="SM00353">
    <property type="entry name" value="HLH"/>
    <property type="match status" value="1"/>
</dbReference>
<dbReference type="SUPFAM" id="SSF47459">
    <property type="entry name" value="HLH, helix-loop-helix DNA-binding domain"/>
    <property type="match status" value="1"/>
</dbReference>
<dbReference type="PROSITE" id="PS50888">
    <property type="entry name" value="BHLH"/>
    <property type="match status" value="1"/>
</dbReference>
<organism>
    <name type="scientific">Mus musculus</name>
    <name type="common">Mouse</name>
    <dbReference type="NCBI Taxonomy" id="10090"/>
    <lineage>
        <taxon>Eukaryota</taxon>
        <taxon>Metazoa</taxon>
        <taxon>Chordata</taxon>
        <taxon>Craniata</taxon>
        <taxon>Vertebrata</taxon>
        <taxon>Euteleostomi</taxon>
        <taxon>Mammalia</taxon>
        <taxon>Eutheria</taxon>
        <taxon>Euarchontoglires</taxon>
        <taxon>Glires</taxon>
        <taxon>Rodentia</taxon>
        <taxon>Myomorpha</taxon>
        <taxon>Muroidea</taxon>
        <taxon>Muridae</taxon>
        <taxon>Murinae</taxon>
        <taxon>Mus</taxon>
        <taxon>Mus</taxon>
    </lineage>
</organism>
<protein>
    <recommendedName>
        <fullName>Mesoderm posterior protein 1</fullName>
    </recommendedName>
</protein>
<evidence type="ECO:0000255" key="1">
    <source>
        <dbReference type="PROSITE-ProRule" id="PRU00981"/>
    </source>
</evidence>
<evidence type="ECO:0000256" key="2">
    <source>
        <dbReference type="SAM" id="MobiDB-lite"/>
    </source>
</evidence>
<evidence type="ECO:0000269" key="3">
    <source>
    </source>
</evidence>
<evidence type="ECO:0000269" key="4">
    <source>
    </source>
</evidence>
<evidence type="ECO:0000269" key="5">
    <source>
    </source>
</evidence>
<evidence type="ECO:0000269" key="6">
    <source>
    </source>
</evidence>
<evidence type="ECO:0000305" key="7"/>
<gene>
    <name type="primary">Mesp1</name>
</gene>
<keyword id="KW-0217">Developmental protein</keyword>
<keyword id="KW-0238">DNA-binding</keyword>
<keyword id="KW-0914">Notch signaling pathway</keyword>
<keyword id="KW-0539">Nucleus</keyword>
<keyword id="KW-1185">Reference proteome</keyword>
<keyword id="KW-0677">Repeat</keyword>
<keyword id="KW-0804">Transcription</keyword>
<keyword id="KW-0805">Transcription regulation</keyword>
<accession>P97309</accession>
<accession>Q059W2</accession>
<feature type="chain" id="PRO_0000304405" description="Mesoderm posterior protein 1">
    <location>
        <begin position="1"/>
        <end position="243"/>
    </location>
</feature>
<feature type="domain" description="bHLH" evidence="1">
    <location>
        <begin position="76"/>
        <end position="130"/>
    </location>
</feature>
<feature type="region of interest" description="Disordered" evidence="2">
    <location>
        <begin position="1"/>
        <end position="86"/>
    </location>
</feature>
<feature type="region of interest" description="Disordered" evidence="2">
    <location>
        <begin position="204"/>
        <end position="228"/>
    </location>
</feature>
<feature type="short sequence motif" description="CPLCP">
    <location>
        <begin position="153"/>
        <end position="157"/>
    </location>
</feature>
<feature type="compositionally biased region" description="Polar residues" evidence="2">
    <location>
        <begin position="27"/>
        <end position="36"/>
    </location>
</feature>
<feature type="sequence conflict" description="In Ref. 1; BAA12041." evidence="7" ref="1">
    <original>R</original>
    <variation>G</variation>
    <location>
        <position position="170"/>
    </location>
</feature>
<feature type="sequence conflict" description="In Ref. 1; BAA12041." evidence="7" ref="1">
    <original>L</original>
    <variation>Q</variation>
    <location>
        <position position="202"/>
    </location>
</feature>
<name>MESP1_MOUSE</name>
<proteinExistence type="evidence at transcript level"/>
<reference key="1">
    <citation type="journal article" date="1996" name="Development">
        <title>MesP1: a novel basic helix-loop-helix protein expressed in the nascent mesodermal cells during mouse gastrulation.</title>
        <authorList>
            <person name="Saga Y."/>
            <person name="Hata N."/>
            <person name="Kobayashi S."/>
            <person name="Magnuson T."/>
            <person name="Seldin M.F."/>
            <person name="Taketo M.M."/>
        </authorList>
    </citation>
    <scope>NUCLEOTIDE SEQUENCE [MRNA]</scope>
    <scope>TISSUE SPECIFICITY</scope>
    <scope>DEVELOPMENTAL STAGE</scope>
    <source>
        <strain>ICR</strain>
    </source>
</reference>
<reference key="2">
    <citation type="journal article" date="2004" name="Genome Res.">
        <title>The status, quality, and expansion of the NIH full-length cDNA project: the Mammalian Gene Collection (MGC).</title>
        <authorList>
            <consortium name="The MGC Project Team"/>
        </authorList>
    </citation>
    <scope>NUCLEOTIDE SEQUENCE [LARGE SCALE MRNA]</scope>
    <source>
        <tissue>Brain</tissue>
    </source>
</reference>
<reference key="3">
    <citation type="journal article" date="2000" name="Development">
        <title>MesP1 and MesP2 are essential for the development of cardiac mesoderm.</title>
        <authorList>
            <person name="Kitajima S."/>
            <person name="Takagi A."/>
            <person name="Inoue T."/>
            <person name="Saga Y."/>
        </authorList>
    </citation>
    <scope>DEVELOPMENTAL STAGE</scope>
    <scope>DISRUPTION PHENOTYPE</scope>
</reference>
<reference key="4">
    <citation type="journal article" date="2005" name="Development">
        <title>Differential contributions of Mesp1 and Mesp2 to the epithelialization and rostro-caudal patterning of somites.</title>
        <authorList>
            <person name="Takahashi Y."/>
            <person name="Kitajima S."/>
            <person name="Inoue T."/>
            <person name="Kanno J."/>
            <person name="Saga Y."/>
        </authorList>
    </citation>
    <scope>FUNCTION</scope>
    <scope>DEVELOPMENTAL STAGE</scope>
    <scope>DISRUPTION PHENOTYPE</scope>
</reference>
<reference key="5">
    <citation type="journal article" date="2007" name="Dev. Biol.">
        <title>Appropriate suppression of Notch signaling by Mesp factors is essential for stripe pattern formation leading to segment boundary formation.</title>
        <authorList>
            <person name="Takahashi Y."/>
            <person name="Yasuhiko Y."/>
            <person name="Kitajima S."/>
            <person name="Kanno J."/>
            <person name="Saga Y."/>
        </authorList>
    </citation>
    <scope>FUNCTION</scope>
    <scope>DEVELOPMENTAL STAGE</scope>
    <scope>DISRUPTION PHENOTYPE</scope>
</reference>
<comment type="function">
    <text evidence="4 5">Transcription factor. Plays a role in the epithelialization of somitic mesoderm and in the development of cardiac mesoderm. Defines the rostrocaudal patterning of the somites by participating in distinct Notch pathways.</text>
</comment>
<comment type="subcellular location">
    <subcellularLocation>
        <location evidence="7">Nucleus</location>
    </subcellularLocation>
</comment>
<comment type="tissue specificity">
    <text evidence="6">No expression was detected in adult tissues except the testis. Expression in the testis was regulated developmentally; expressed 2 weeks after birth, and increases, reaching the full expression level in mature testes.</text>
</comment>
<comment type="developmental stage">
    <text evidence="3 4 5 6">The earliest expression is detected at the junction of the epiblast and extraembryonic ectoderm, which is the initiation site for gastrulation. Around 6.5-6.75 dpc, expression becomes evident as gastrulation progresses. Expression does not spread over all mesodermal cells; it is seen only in a fraction of cells, particularly those in the early emergence group destined to become the extraembryonic mesoderm and the most posterior part of the tailbud. Expression remains for a while at the base of the allantois, and then spreads out to the lateral margins of the tail bud mesoderm. Expressed in the anterior presomitic mesoderm in a broad or thin stripe pattern. Expressed in the paraxial mesoderm during somitogenesis. Expression disappears before 8.5 dpc.</text>
</comment>
<comment type="induction">
    <text>Expression is induced by Notch signaling.</text>
</comment>
<comment type="disruption phenotype">
    <text evidence="3 4 5">Mice embryos exhibit defects in single heart tube formation, due to a delay in mesodermal migration. However, the cells eventually acquired migratory activity and gave rise to an abnormal heart tube. Mice lacking Mesp1 and Mesp2 die around 9.5 dpc. The major defect is the apparent lack of any mesodermal layer between endoderm and ectoderm and a defect in the migratory activity of mesodermal cells. It seems that a compensatory mechanism exists in which Mesp1 expression is up-regulated in the absence of Mesp2. Mesp1 may be involved in the rescue of somitogenesis in the null Mesp2 embryos.</text>
</comment>
<sequence length="243" mass="26386">MAQPLCEPRSESWILSPAGRQPPMPSDGNSVCSPAWSSDPWDGAQASSPAPPCARPARRAGTPGRRGTHGSRLGSGQRQSASEREKLRMRTLARALHELRRFLPPSVAPTGQNLTKIETLRLAIRYIGHLSAVLGLSEDNLRRQRHAVSPRGCPLCPDSDLAQSQSLGPRLSPAVCSGVSWGSPPAYPRPRVAAESWDPSFLYAETASQERQEMEPSPSSPLFSSDMLALLETWTPPQEWPPA</sequence>